<feature type="chain" id="PRO_1000094879" description="Large-conductance mechanosensitive channel">
    <location>
        <begin position="1"/>
        <end position="148"/>
    </location>
</feature>
<feature type="transmembrane region" description="Helical" evidence="1">
    <location>
        <begin position="21"/>
        <end position="41"/>
    </location>
</feature>
<feature type="transmembrane region" description="Helical" evidence="1">
    <location>
        <begin position="45"/>
        <end position="65"/>
    </location>
</feature>
<feature type="transmembrane region" description="Helical" evidence="1">
    <location>
        <begin position="92"/>
        <end position="112"/>
    </location>
</feature>
<sequence>MSKASGFLKEFRDFAVKGNAIDLAVGVIIGAAFGKIVDSVVKDLIMPLVNYILGGSVDFSNKFLVLSAPDGYAGPMTYADLTKAGAIVLAWGNFLTILINFILLALVVFIIVKAINAARRKEEEAPAEPAAPPEDVVVLREIRDLLKK</sequence>
<keyword id="KW-0997">Cell inner membrane</keyword>
<keyword id="KW-1003">Cell membrane</keyword>
<keyword id="KW-0407">Ion channel</keyword>
<keyword id="KW-0406">Ion transport</keyword>
<keyword id="KW-0472">Membrane</keyword>
<keyword id="KW-0812">Transmembrane</keyword>
<keyword id="KW-1133">Transmembrane helix</keyword>
<keyword id="KW-0813">Transport</keyword>
<evidence type="ECO:0000255" key="1">
    <source>
        <dbReference type="HAMAP-Rule" id="MF_00115"/>
    </source>
</evidence>
<dbReference type="EMBL" id="AM902716">
    <property type="protein sequence ID" value="CAP40454.1"/>
    <property type="molecule type" value="Genomic_DNA"/>
</dbReference>
<dbReference type="STRING" id="94624.Bpet0123"/>
<dbReference type="KEGG" id="bpt:Bpet0123"/>
<dbReference type="eggNOG" id="COG1970">
    <property type="taxonomic scope" value="Bacteria"/>
</dbReference>
<dbReference type="Proteomes" id="UP000001225">
    <property type="component" value="Chromosome"/>
</dbReference>
<dbReference type="GO" id="GO:0005886">
    <property type="term" value="C:plasma membrane"/>
    <property type="evidence" value="ECO:0007669"/>
    <property type="project" value="UniProtKB-SubCell"/>
</dbReference>
<dbReference type="GO" id="GO:0008381">
    <property type="term" value="F:mechanosensitive monoatomic ion channel activity"/>
    <property type="evidence" value="ECO:0007669"/>
    <property type="project" value="UniProtKB-UniRule"/>
</dbReference>
<dbReference type="Gene3D" id="1.10.1200.120">
    <property type="entry name" value="Large-conductance mechanosensitive channel, MscL, domain 1"/>
    <property type="match status" value="1"/>
</dbReference>
<dbReference type="HAMAP" id="MF_00115">
    <property type="entry name" value="MscL"/>
    <property type="match status" value="1"/>
</dbReference>
<dbReference type="InterPro" id="IPR001185">
    <property type="entry name" value="MS_channel"/>
</dbReference>
<dbReference type="InterPro" id="IPR037673">
    <property type="entry name" value="MSC/AndL"/>
</dbReference>
<dbReference type="InterPro" id="IPR036019">
    <property type="entry name" value="MscL_channel"/>
</dbReference>
<dbReference type="NCBIfam" id="TIGR00220">
    <property type="entry name" value="mscL"/>
    <property type="match status" value="1"/>
</dbReference>
<dbReference type="NCBIfam" id="NF001843">
    <property type="entry name" value="PRK00567.1-4"/>
    <property type="match status" value="1"/>
</dbReference>
<dbReference type="NCBIfam" id="NF010557">
    <property type="entry name" value="PRK13952.1"/>
    <property type="match status" value="1"/>
</dbReference>
<dbReference type="PANTHER" id="PTHR30266:SF2">
    <property type="entry name" value="LARGE-CONDUCTANCE MECHANOSENSITIVE CHANNEL"/>
    <property type="match status" value="1"/>
</dbReference>
<dbReference type="PANTHER" id="PTHR30266">
    <property type="entry name" value="MECHANOSENSITIVE CHANNEL MSCL"/>
    <property type="match status" value="1"/>
</dbReference>
<dbReference type="Pfam" id="PF01741">
    <property type="entry name" value="MscL"/>
    <property type="match status" value="1"/>
</dbReference>
<dbReference type="PRINTS" id="PR01264">
    <property type="entry name" value="MECHCHANNEL"/>
</dbReference>
<dbReference type="SUPFAM" id="SSF81330">
    <property type="entry name" value="Gated mechanosensitive channel"/>
    <property type="match status" value="1"/>
</dbReference>
<name>MSCL_BORPD</name>
<organism>
    <name type="scientific">Bordetella petrii (strain ATCC BAA-461 / DSM 12804 / CCUG 43448)</name>
    <dbReference type="NCBI Taxonomy" id="340100"/>
    <lineage>
        <taxon>Bacteria</taxon>
        <taxon>Pseudomonadati</taxon>
        <taxon>Pseudomonadota</taxon>
        <taxon>Betaproteobacteria</taxon>
        <taxon>Burkholderiales</taxon>
        <taxon>Alcaligenaceae</taxon>
        <taxon>Bordetella</taxon>
    </lineage>
</organism>
<comment type="function">
    <text evidence="1">Channel that opens in response to stretch forces in the membrane lipid bilayer. May participate in the regulation of osmotic pressure changes within the cell.</text>
</comment>
<comment type="subunit">
    <text evidence="1">Homopentamer.</text>
</comment>
<comment type="subcellular location">
    <subcellularLocation>
        <location evidence="1">Cell inner membrane</location>
        <topology evidence="1">Multi-pass membrane protein</topology>
    </subcellularLocation>
</comment>
<comment type="similarity">
    <text evidence="1">Belongs to the MscL family.</text>
</comment>
<proteinExistence type="inferred from homology"/>
<protein>
    <recommendedName>
        <fullName evidence="1">Large-conductance mechanosensitive channel</fullName>
    </recommendedName>
</protein>
<accession>A9HW97</accession>
<reference key="1">
    <citation type="journal article" date="2008" name="BMC Genomics">
        <title>The missing link: Bordetella petrii is endowed with both the metabolic versatility of environmental bacteria and virulence traits of pathogenic Bordetellae.</title>
        <authorList>
            <person name="Gross R."/>
            <person name="Guzman C.A."/>
            <person name="Sebaihia M."/>
            <person name="Martin dos Santos V.A.P."/>
            <person name="Pieper D.H."/>
            <person name="Koebnik R."/>
            <person name="Lechner M."/>
            <person name="Bartels D."/>
            <person name="Buhrmester J."/>
            <person name="Choudhuri J.V."/>
            <person name="Ebensen T."/>
            <person name="Gaigalat L."/>
            <person name="Herrmann S."/>
            <person name="Khachane A.N."/>
            <person name="Larisch C."/>
            <person name="Link S."/>
            <person name="Linke B."/>
            <person name="Meyer F."/>
            <person name="Mormann S."/>
            <person name="Nakunst D."/>
            <person name="Rueckert C."/>
            <person name="Schneiker-Bekel S."/>
            <person name="Schulze K."/>
            <person name="Voerholter F.-J."/>
            <person name="Yevsa T."/>
            <person name="Engle J.T."/>
            <person name="Goldman W.E."/>
            <person name="Puehler A."/>
            <person name="Goebel U.B."/>
            <person name="Goesmann A."/>
            <person name="Bloecker H."/>
            <person name="Kaiser O."/>
            <person name="Martinez-Arias R."/>
        </authorList>
    </citation>
    <scope>NUCLEOTIDE SEQUENCE [LARGE SCALE GENOMIC DNA]</scope>
    <source>
        <strain>ATCC BAA-461 / DSM 12804 / CCUG 43448</strain>
    </source>
</reference>
<gene>
    <name evidence="1" type="primary">mscL</name>
    <name type="ordered locus">Bpet0123</name>
</gene>